<protein>
    <recommendedName>
        <fullName evidence="1">Xaa-Pro dipeptidase</fullName>
        <shortName evidence="1">X-Pro dipeptidase</shortName>
        <ecNumber evidence="1">3.4.13.9</ecNumber>
    </recommendedName>
    <alternativeName>
        <fullName evidence="1">Imidodipeptidase</fullName>
    </alternativeName>
    <alternativeName>
        <fullName evidence="1">Proline dipeptidase</fullName>
        <shortName evidence="1">Prolidase</shortName>
    </alternativeName>
</protein>
<evidence type="ECO:0000255" key="1">
    <source>
        <dbReference type="HAMAP-Rule" id="MF_01279"/>
    </source>
</evidence>
<feature type="chain" id="PRO_1000140312" description="Xaa-Pro dipeptidase">
    <location>
        <begin position="1"/>
        <end position="443"/>
    </location>
</feature>
<feature type="binding site" evidence="1">
    <location>
        <position position="246"/>
    </location>
    <ligand>
        <name>Mn(2+)</name>
        <dbReference type="ChEBI" id="CHEBI:29035"/>
        <label>2</label>
    </ligand>
</feature>
<feature type="binding site" evidence="1">
    <location>
        <position position="257"/>
    </location>
    <ligand>
        <name>Mn(2+)</name>
        <dbReference type="ChEBI" id="CHEBI:29035"/>
        <label>1</label>
    </ligand>
</feature>
<feature type="binding site" evidence="1">
    <location>
        <position position="257"/>
    </location>
    <ligand>
        <name>Mn(2+)</name>
        <dbReference type="ChEBI" id="CHEBI:29035"/>
        <label>2</label>
    </ligand>
</feature>
<feature type="binding site" evidence="1">
    <location>
        <position position="339"/>
    </location>
    <ligand>
        <name>Mn(2+)</name>
        <dbReference type="ChEBI" id="CHEBI:29035"/>
        <label>1</label>
    </ligand>
</feature>
<feature type="binding site" evidence="1">
    <location>
        <position position="384"/>
    </location>
    <ligand>
        <name>Mn(2+)</name>
        <dbReference type="ChEBI" id="CHEBI:29035"/>
        <label>1</label>
    </ligand>
</feature>
<feature type="binding site" evidence="1">
    <location>
        <position position="423"/>
    </location>
    <ligand>
        <name>Mn(2+)</name>
        <dbReference type="ChEBI" id="CHEBI:29035"/>
        <label>1</label>
    </ligand>
</feature>
<feature type="binding site" evidence="1">
    <location>
        <position position="423"/>
    </location>
    <ligand>
        <name>Mn(2+)</name>
        <dbReference type="ChEBI" id="CHEBI:29035"/>
        <label>2</label>
    </ligand>
</feature>
<gene>
    <name evidence="1" type="primary">pepQ</name>
    <name type="ordered locus">ECH74115_5286</name>
</gene>
<accession>B5YY94</accession>
<keyword id="KW-0224">Dipeptidase</keyword>
<keyword id="KW-0378">Hydrolase</keyword>
<keyword id="KW-0464">Manganese</keyword>
<keyword id="KW-0479">Metal-binding</keyword>
<keyword id="KW-0482">Metalloprotease</keyword>
<keyword id="KW-0645">Protease</keyword>
<proteinExistence type="inferred from homology"/>
<organism>
    <name type="scientific">Escherichia coli O157:H7 (strain EC4115 / EHEC)</name>
    <dbReference type="NCBI Taxonomy" id="444450"/>
    <lineage>
        <taxon>Bacteria</taxon>
        <taxon>Pseudomonadati</taxon>
        <taxon>Pseudomonadota</taxon>
        <taxon>Gammaproteobacteria</taxon>
        <taxon>Enterobacterales</taxon>
        <taxon>Enterobacteriaceae</taxon>
        <taxon>Escherichia</taxon>
    </lineage>
</organism>
<comment type="function">
    <text evidence="1">Splits dipeptides with a prolyl residue in the C-terminal position.</text>
</comment>
<comment type="catalytic activity">
    <reaction evidence="1">
        <text>Xaa-L-Pro dipeptide + H2O = an L-alpha-amino acid + L-proline</text>
        <dbReference type="Rhea" id="RHEA:76407"/>
        <dbReference type="ChEBI" id="CHEBI:15377"/>
        <dbReference type="ChEBI" id="CHEBI:59869"/>
        <dbReference type="ChEBI" id="CHEBI:60039"/>
        <dbReference type="ChEBI" id="CHEBI:195196"/>
        <dbReference type="EC" id="3.4.13.9"/>
    </reaction>
</comment>
<comment type="cofactor">
    <cofactor evidence="1">
        <name>Mn(2+)</name>
        <dbReference type="ChEBI" id="CHEBI:29035"/>
    </cofactor>
    <text evidence="1">Binds 2 manganese ions per subunit.</text>
</comment>
<comment type="similarity">
    <text evidence="1">Belongs to the peptidase M24B family. Bacterial-type prolidase subfamily.</text>
</comment>
<reference key="1">
    <citation type="journal article" date="2011" name="Proc. Natl. Acad. Sci. U.S.A.">
        <title>Genomic anatomy of Escherichia coli O157:H7 outbreaks.</title>
        <authorList>
            <person name="Eppinger M."/>
            <person name="Mammel M.K."/>
            <person name="Leclerc J.E."/>
            <person name="Ravel J."/>
            <person name="Cebula T.A."/>
        </authorList>
    </citation>
    <scope>NUCLEOTIDE SEQUENCE [LARGE SCALE GENOMIC DNA]</scope>
    <source>
        <strain>EC4115 / EHEC</strain>
    </source>
</reference>
<dbReference type="EC" id="3.4.13.9" evidence="1"/>
<dbReference type="EMBL" id="CP001164">
    <property type="protein sequence ID" value="ACI37250.1"/>
    <property type="molecule type" value="Genomic_DNA"/>
</dbReference>
<dbReference type="RefSeq" id="WP_000444585.1">
    <property type="nucleotide sequence ID" value="NC_011353.1"/>
</dbReference>
<dbReference type="SMR" id="B5YY94"/>
<dbReference type="MEROPS" id="M24.003"/>
<dbReference type="KEGG" id="ecf:ECH74115_5286"/>
<dbReference type="HOGENOM" id="CLU_050675_0_0_6"/>
<dbReference type="GO" id="GO:0005829">
    <property type="term" value="C:cytosol"/>
    <property type="evidence" value="ECO:0007669"/>
    <property type="project" value="TreeGrafter"/>
</dbReference>
<dbReference type="GO" id="GO:0004177">
    <property type="term" value="F:aminopeptidase activity"/>
    <property type="evidence" value="ECO:0007669"/>
    <property type="project" value="TreeGrafter"/>
</dbReference>
<dbReference type="GO" id="GO:0046872">
    <property type="term" value="F:metal ion binding"/>
    <property type="evidence" value="ECO:0007669"/>
    <property type="project" value="UniProtKB-KW"/>
</dbReference>
<dbReference type="GO" id="GO:0008235">
    <property type="term" value="F:metalloexopeptidase activity"/>
    <property type="evidence" value="ECO:0007669"/>
    <property type="project" value="UniProtKB-UniRule"/>
</dbReference>
<dbReference type="GO" id="GO:0016795">
    <property type="term" value="F:phosphoric triester hydrolase activity"/>
    <property type="evidence" value="ECO:0007669"/>
    <property type="project" value="InterPro"/>
</dbReference>
<dbReference type="GO" id="GO:0102009">
    <property type="term" value="F:proline dipeptidase activity"/>
    <property type="evidence" value="ECO:0007669"/>
    <property type="project" value="UniProtKB-EC"/>
</dbReference>
<dbReference type="GO" id="GO:0006508">
    <property type="term" value="P:proteolysis"/>
    <property type="evidence" value="ECO:0007669"/>
    <property type="project" value="UniProtKB-KW"/>
</dbReference>
<dbReference type="CDD" id="cd01087">
    <property type="entry name" value="Prolidase"/>
    <property type="match status" value="1"/>
</dbReference>
<dbReference type="FunFam" id="3.40.350.10:FF:000002">
    <property type="entry name" value="Xaa-Pro dipeptidase"/>
    <property type="match status" value="1"/>
</dbReference>
<dbReference type="FunFam" id="3.90.230.10:FF:000006">
    <property type="entry name" value="Xaa-Pro dipeptidase"/>
    <property type="match status" value="1"/>
</dbReference>
<dbReference type="Gene3D" id="3.90.230.10">
    <property type="entry name" value="Creatinase/methionine aminopeptidase superfamily"/>
    <property type="match status" value="1"/>
</dbReference>
<dbReference type="Gene3D" id="3.40.350.10">
    <property type="entry name" value="Creatinase/prolidase N-terminal domain"/>
    <property type="match status" value="1"/>
</dbReference>
<dbReference type="HAMAP" id="MF_01279">
    <property type="entry name" value="X_Pro_dipeptid"/>
    <property type="match status" value="1"/>
</dbReference>
<dbReference type="InterPro" id="IPR029149">
    <property type="entry name" value="Creatin/AminoP/Spt16_N"/>
</dbReference>
<dbReference type="InterPro" id="IPR036005">
    <property type="entry name" value="Creatinase/aminopeptidase-like"/>
</dbReference>
<dbReference type="InterPro" id="IPR048819">
    <property type="entry name" value="PepQ_N"/>
</dbReference>
<dbReference type="InterPro" id="IPR000994">
    <property type="entry name" value="Pept_M24"/>
</dbReference>
<dbReference type="InterPro" id="IPR001131">
    <property type="entry name" value="Peptidase_M24B_aminopep-P_CS"/>
</dbReference>
<dbReference type="InterPro" id="IPR052433">
    <property type="entry name" value="X-Pro_dipept-like"/>
</dbReference>
<dbReference type="InterPro" id="IPR022846">
    <property type="entry name" value="X_Pro_dipept"/>
</dbReference>
<dbReference type="NCBIfam" id="NF010133">
    <property type="entry name" value="PRK13607.1"/>
    <property type="match status" value="1"/>
</dbReference>
<dbReference type="PANTHER" id="PTHR43226">
    <property type="entry name" value="XAA-PRO AMINOPEPTIDASE 3"/>
    <property type="match status" value="1"/>
</dbReference>
<dbReference type="PANTHER" id="PTHR43226:SF8">
    <property type="entry name" value="XAA-PRO DIPEPTIDASE"/>
    <property type="match status" value="1"/>
</dbReference>
<dbReference type="Pfam" id="PF21216">
    <property type="entry name" value="PepQ_N"/>
    <property type="match status" value="1"/>
</dbReference>
<dbReference type="Pfam" id="PF00557">
    <property type="entry name" value="Peptidase_M24"/>
    <property type="match status" value="1"/>
</dbReference>
<dbReference type="SUPFAM" id="SSF55920">
    <property type="entry name" value="Creatinase/aminopeptidase"/>
    <property type="match status" value="1"/>
</dbReference>
<dbReference type="PROSITE" id="PS00491">
    <property type="entry name" value="PROLINE_PEPTIDASE"/>
    <property type="match status" value="1"/>
</dbReference>
<name>PEPQ_ECO5E</name>
<sequence>MESLASLYKNHIATLQERTRDALTRFKLDALLIHSGELFNVFLDDHPYPFKVNPQFKAWVPVTQVPNCWLLVDGVNKPKLWFYLPVDYWHNVEPLPTSFWTEDVEVIALPKADGIGSLLPAARGNIGYIGPVPERALQLGIEASNINPKGVIDYLHYYRSFKTEYELACMREAQKMAVNGHRAAEEAFRSGMSEFDINIAYLTATGHRDTDVPYSNIVALNEHAAVLHYTKLDHQASEEMRSFLLDAGAEYNGYAADLTRTWSAKSDNDYAQLVKDVNDEQLALIATMKAGVSYVDYHIQFHQRIAKLLRKHQIITDMSEEAMVENDLTGPFMPHGIGHPLGLQVHDVAGFMQDDSGTHLAAPAKYPYLRCTRILQPGMVLTIEPGIYFIESLLAPWREGQFSKHFNWQKIEALKPFGGIRIEDNVVIHENNVENMTRDLKLA</sequence>